<organism>
    <name type="scientific">Staphylococcus saprophyticus subsp. saprophyticus (strain ATCC 15305 / DSM 20229 / NCIMB 8711 / NCTC 7292 / S-41)</name>
    <dbReference type="NCBI Taxonomy" id="342451"/>
    <lineage>
        <taxon>Bacteria</taxon>
        <taxon>Bacillati</taxon>
        <taxon>Bacillota</taxon>
        <taxon>Bacilli</taxon>
        <taxon>Bacillales</taxon>
        <taxon>Staphylococcaceae</taxon>
        <taxon>Staphylococcus</taxon>
    </lineage>
</organism>
<reference key="1">
    <citation type="journal article" date="2005" name="Proc. Natl. Acad. Sci. U.S.A.">
        <title>Whole genome sequence of Staphylococcus saprophyticus reveals the pathogenesis of uncomplicated urinary tract infection.</title>
        <authorList>
            <person name="Kuroda M."/>
            <person name="Yamashita A."/>
            <person name="Hirakawa H."/>
            <person name="Kumano M."/>
            <person name="Morikawa K."/>
            <person name="Higashide M."/>
            <person name="Maruyama A."/>
            <person name="Inose Y."/>
            <person name="Matoba K."/>
            <person name="Toh H."/>
            <person name="Kuhara S."/>
            <person name="Hattori M."/>
            <person name="Ohta T."/>
        </authorList>
    </citation>
    <scope>NUCLEOTIDE SEQUENCE [LARGE SCALE GENOMIC DNA]</scope>
    <source>
        <strain>ATCC 15305 / DSM 20229 / NCIMB 8711 / NCTC 7292 / S-41</strain>
    </source>
</reference>
<feature type="chain" id="PRO_0000100112" description="Putative 3-methyladenine DNA glycosylase">
    <location>
        <begin position="1"/>
        <end position="203"/>
    </location>
</feature>
<comment type="similarity">
    <text evidence="1">Belongs to the DNA glycosylase MPG family.</text>
</comment>
<name>3MGH_STAS1</name>
<dbReference type="EC" id="3.2.2.-" evidence="1"/>
<dbReference type="EMBL" id="AP008934">
    <property type="protein sequence ID" value="BAE17706.1"/>
    <property type="molecule type" value="Genomic_DNA"/>
</dbReference>
<dbReference type="RefSeq" id="WP_002482515.1">
    <property type="nucleotide sequence ID" value="NZ_MTGA01000036.1"/>
</dbReference>
<dbReference type="SMR" id="Q49ZR8"/>
<dbReference type="KEGG" id="ssp:SSP0561"/>
<dbReference type="eggNOG" id="COG2094">
    <property type="taxonomic scope" value="Bacteria"/>
</dbReference>
<dbReference type="HOGENOM" id="CLU_060471_2_0_9"/>
<dbReference type="OrthoDB" id="9794313at2"/>
<dbReference type="Proteomes" id="UP000006371">
    <property type="component" value="Chromosome"/>
</dbReference>
<dbReference type="GO" id="GO:0003905">
    <property type="term" value="F:alkylbase DNA N-glycosylase activity"/>
    <property type="evidence" value="ECO:0007669"/>
    <property type="project" value="InterPro"/>
</dbReference>
<dbReference type="GO" id="GO:0003677">
    <property type="term" value="F:DNA binding"/>
    <property type="evidence" value="ECO:0007669"/>
    <property type="project" value="InterPro"/>
</dbReference>
<dbReference type="GO" id="GO:0006284">
    <property type="term" value="P:base-excision repair"/>
    <property type="evidence" value="ECO:0007669"/>
    <property type="project" value="InterPro"/>
</dbReference>
<dbReference type="CDD" id="cd00540">
    <property type="entry name" value="AAG"/>
    <property type="match status" value="1"/>
</dbReference>
<dbReference type="FunFam" id="3.10.300.10:FF:000001">
    <property type="entry name" value="Putative 3-methyladenine DNA glycosylase"/>
    <property type="match status" value="1"/>
</dbReference>
<dbReference type="Gene3D" id="3.10.300.10">
    <property type="entry name" value="Methylpurine-DNA glycosylase (MPG)"/>
    <property type="match status" value="1"/>
</dbReference>
<dbReference type="HAMAP" id="MF_00527">
    <property type="entry name" value="3MGH"/>
    <property type="match status" value="1"/>
</dbReference>
<dbReference type="InterPro" id="IPR011034">
    <property type="entry name" value="Formyl_transferase-like_C_sf"/>
</dbReference>
<dbReference type="InterPro" id="IPR003180">
    <property type="entry name" value="MPG"/>
</dbReference>
<dbReference type="InterPro" id="IPR036995">
    <property type="entry name" value="MPG_sf"/>
</dbReference>
<dbReference type="NCBIfam" id="TIGR00567">
    <property type="entry name" value="3mg"/>
    <property type="match status" value="1"/>
</dbReference>
<dbReference type="PANTHER" id="PTHR10429">
    <property type="entry name" value="DNA-3-METHYLADENINE GLYCOSYLASE"/>
    <property type="match status" value="1"/>
</dbReference>
<dbReference type="PANTHER" id="PTHR10429:SF0">
    <property type="entry name" value="DNA-3-METHYLADENINE GLYCOSYLASE"/>
    <property type="match status" value="1"/>
</dbReference>
<dbReference type="Pfam" id="PF02245">
    <property type="entry name" value="Pur_DNA_glyco"/>
    <property type="match status" value="1"/>
</dbReference>
<dbReference type="SUPFAM" id="SSF50486">
    <property type="entry name" value="FMT C-terminal domain-like"/>
    <property type="match status" value="1"/>
</dbReference>
<sequence>MDFLQRDTVTIAKDLLGVRIIYHDELQTFTGYIVETEAYIGTKDRAAHGYNGKRTPKVESLYKQGGTIYAHVMHTHLLINFVTQLEGQPEGVLIRAIEPEEGIELMAINRGKNGFELTNGPGKWTKAFNIPRHLDGSKLNEGRLKIDTKNRKYPKEIEASGRIGIPNKGEWTHKPLRFTVKGNPYISRMKKSDMRQPEYTWRI</sequence>
<accession>Q49ZR8</accession>
<keyword id="KW-0227">DNA damage</keyword>
<keyword id="KW-0234">DNA repair</keyword>
<keyword id="KW-0378">Hydrolase</keyword>
<keyword id="KW-1185">Reference proteome</keyword>
<protein>
    <recommendedName>
        <fullName evidence="1">Putative 3-methyladenine DNA glycosylase</fullName>
        <ecNumber evidence="1">3.2.2.-</ecNumber>
    </recommendedName>
</protein>
<gene>
    <name type="ordered locus">SSP0561</name>
</gene>
<evidence type="ECO:0000255" key="1">
    <source>
        <dbReference type="HAMAP-Rule" id="MF_00527"/>
    </source>
</evidence>
<proteinExistence type="inferred from homology"/>